<protein>
    <recommendedName>
        <fullName evidence="1">Large-conductance mechanosensitive channel</fullName>
    </recommendedName>
</protein>
<sequence length="136" mass="14957">MSIIKEFREFAMRGNVVDLAVGVIIGAAFGKIVSSLVADIIMPPLGLLIGGIDFKQFAVTLRDAQGDIPAVVMHYGVFIQNVFDFLIVAFAIFMAIKLINKLNRKKEEPAAAPAPTKEEVLLTEIRDLLKEQNNRS</sequence>
<reference key="1">
    <citation type="journal article" date="2008" name="J. Bacteriol.">
        <title>The pangenome structure of Escherichia coli: comparative genomic analysis of E. coli commensal and pathogenic isolates.</title>
        <authorList>
            <person name="Rasko D.A."/>
            <person name="Rosovitz M.J."/>
            <person name="Myers G.S.A."/>
            <person name="Mongodin E.F."/>
            <person name="Fricke W.F."/>
            <person name="Gajer P."/>
            <person name="Crabtree J."/>
            <person name="Sebaihia M."/>
            <person name="Thomson N.R."/>
            <person name="Chaudhuri R."/>
            <person name="Henderson I.R."/>
            <person name="Sperandio V."/>
            <person name="Ravel J."/>
        </authorList>
    </citation>
    <scope>NUCLEOTIDE SEQUENCE [LARGE SCALE GENOMIC DNA]</scope>
    <source>
        <strain>HS</strain>
    </source>
</reference>
<comment type="function">
    <text evidence="1">Channel that opens in response to stretch forces in the membrane lipid bilayer. May participate in the regulation of osmotic pressure changes within the cell.</text>
</comment>
<comment type="subunit">
    <text evidence="1">Homopentamer.</text>
</comment>
<comment type="subcellular location">
    <subcellularLocation>
        <location evidence="1">Cell inner membrane</location>
        <topology evidence="1">Multi-pass membrane protein</topology>
    </subcellularLocation>
</comment>
<comment type="similarity">
    <text evidence="1">Belongs to the MscL family.</text>
</comment>
<keyword id="KW-0997">Cell inner membrane</keyword>
<keyword id="KW-1003">Cell membrane</keyword>
<keyword id="KW-0407">Ion channel</keyword>
<keyword id="KW-0406">Ion transport</keyword>
<keyword id="KW-0472">Membrane</keyword>
<keyword id="KW-0812">Transmembrane</keyword>
<keyword id="KW-1133">Transmembrane helix</keyword>
<keyword id="KW-0813">Transport</keyword>
<dbReference type="EMBL" id="CP000802">
    <property type="protein sequence ID" value="ABV07699.1"/>
    <property type="molecule type" value="Genomic_DNA"/>
</dbReference>
<dbReference type="RefSeq" id="WP_000022442.1">
    <property type="nucleotide sequence ID" value="NC_009800.1"/>
</dbReference>
<dbReference type="SMR" id="A8A595"/>
<dbReference type="GeneID" id="75173461"/>
<dbReference type="KEGG" id="ecx:EcHS_A3484"/>
<dbReference type="HOGENOM" id="CLU_095787_0_0_6"/>
<dbReference type="GO" id="GO:0005886">
    <property type="term" value="C:plasma membrane"/>
    <property type="evidence" value="ECO:0007669"/>
    <property type="project" value="UniProtKB-SubCell"/>
</dbReference>
<dbReference type="GO" id="GO:0008381">
    <property type="term" value="F:mechanosensitive monoatomic ion channel activity"/>
    <property type="evidence" value="ECO:0007669"/>
    <property type="project" value="UniProtKB-UniRule"/>
</dbReference>
<dbReference type="FunFam" id="1.10.1200.120:FF:000001">
    <property type="entry name" value="Large-conductance mechanosensitive channel"/>
    <property type="match status" value="1"/>
</dbReference>
<dbReference type="Gene3D" id="1.10.1200.120">
    <property type="entry name" value="Large-conductance mechanosensitive channel, MscL, domain 1"/>
    <property type="match status" value="1"/>
</dbReference>
<dbReference type="HAMAP" id="MF_00115">
    <property type="entry name" value="MscL"/>
    <property type="match status" value="1"/>
</dbReference>
<dbReference type="InterPro" id="IPR019823">
    <property type="entry name" value="Mechanosensitive_channel_CS"/>
</dbReference>
<dbReference type="InterPro" id="IPR001185">
    <property type="entry name" value="MS_channel"/>
</dbReference>
<dbReference type="InterPro" id="IPR037673">
    <property type="entry name" value="MSC/AndL"/>
</dbReference>
<dbReference type="InterPro" id="IPR036019">
    <property type="entry name" value="MscL_channel"/>
</dbReference>
<dbReference type="NCBIfam" id="TIGR00220">
    <property type="entry name" value="mscL"/>
    <property type="match status" value="1"/>
</dbReference>
<dbReference type="NCBIfam" id="NF001841">
    <property type="entry name" value="PRK00567.1-1"/>
    <property type="match status" value="1"/>
</dbReference>
<dbReference type="NCBIfam" id="NF001843">
    <property type="entry name" value="PRK00567.1-4"/>
    <property type="match status" value="1"/>
</dbReference>
<dbReference type="PANTHER" id="PTHR30266:SF2">
    <property type="entry name" value="LARGE-CONDUCTANCE MECHANOSENSITIVE CHANNEL"/>
    <property type="match status" value="1"/>
</dbReference>
<dbReference type="PANTHER" id="PTHR30266">
    <property type="entry name" value="MECHANOSENSITIVE CHANNEL MSCL"/>
    <property type="match status" value="1"/>
</dbReference>
<dbReference type="Pfam" id="PF01741">
    <property type="entry name" value="MscL"/>
    <property type="match status" value="1"/>
</dbReference>
<dbReference type="PRINTS" id="PR01264">
    <property type="entry name" value="MECHCHANNEL"/>
</dbReference>
<dbReference type="SUPFAM" id="SSF81330">
    <property type="entry name" value="Gated mechanosensitive channel"/>
    <property type="match status" value="1"/>
</dbReference>
<dbReference type="PROSITE" id="PS01327">
    <property type="entry name" value="MSCL"/>
    <property type="match status" value="1"/>
</dbReference>
<accession>A8A595</accession>
<name>MSCL_ECOHS</name>
<evidence type="ECO:0000255" key="1">
    <source>
        <dbReference type="HAMAP-Rule" id="MF_00115"/>
    </source>
</evidence>
<proteinExistence type="inferred from homology"/>
<gene>
    <name evidence="1" type="primary">mscL</name>
    <name type="ordered locus">EcHS_A3484</name>
</gene>
<feature type="chain" id="PRO_1000057755" description="Large-conductance mechanosensitive channel">
    <location>
        <begin position="1"/>
        <end position="136"/>
    </location>
</feature>
<feature type="transmembrane region" description="Helical" evidence="1">
    <location>
        <begin position="10"/>
        <end position="30"/>
    </location>
</feature>
<feature type="transmembrane region" description="Helical" evidence="1">
    <location>
        <begin position="76"/>
        <end position="96"/>
    </location>
</feature>
<organism>
    <name type="scientific">Escherichia coli O9:H4 (strain HS)</name>
    <dbReference type="NCBI Taxonomy" id="331112"/>
    <lineage>
        <taxon>Bacteria</taxon>
        <taxon>Pseudomonadati</taxon>
        <taxon>Pseudomonadota</taxon>
        <taxon>Gammaproteobacteria</taxon>
        <taxon>Enterobacterales</taxon>
        <taxon>Enterobacteriaceae</taxon>
        <taxon>Escherichia</taxon>
    </lineage>
</organism>